<organism>
    <name type="scientific">Myotis daubentonii</name>
    <name type="common">Daubenton's bat</name>
    <dbReference type="NCBI Taxonomy" id="98922"/>
    <lineage>
        <taxon>Eukaryota</taxon>
        <taxon>Metazoa</taxon>
        <taxon>Chordata</taxon>
        <taxon>Craniata</taxon>
        <taxon>Vertebrata</taxon>
        <taxon>Euteleostomi</taxon>
        <taxon>Mammalia</taxon>
        <taxon>Eutheria</taxon>
        <taxon>Laurasiatheria</taxon>
        <taxon>Chiroptera</taxon>
        <taxon>Yangochiroptera</taxon>
        <taxon>Vespertilionidae</taxon>
        <taxon>Myotis</taxon>
    </lineage>
</organism>
<name>HSP1_MYODA</name>
<evidence type="ECO:0000250" key="1"/>
<evidence type="ECO:0000305" key="2"/>
<proteinExistence type="evidence at transcript level"/>
<accession>Q8WNY8</accession>
<protein>
    <recommendedName>
        <fullName>Sperm protamine P1</fullName>
    </recommendedName>
</protein>
<keyword id="KW-0158">Chromosome</keyword>
<keyword id="KW-0217">Developmental protein</keyword>
<keyword id="KW-0221">Differentiation</keyword>
<keyword id="KW-0226">DNA condensation</keyword>
<keyword id="KW-0238">DNA-binding</keyword>
<keyword id="KW-0544">Nucleosome core</keyword>
<keyword id="KW-0539">Nucleus</keyword>
<keyword id="KW-0744">Spermatogenesis</keyword>
<dbReference type="EMBL" id="AF435946">
    <property type="protein sequence ID" value="AAL35580.1"/>
    <property type="molecule type" value="Genomic_DNA"/>
</dbReference>
<dbReference type="GO" id="GO:0000786">
    <property type="term" value="C:nucleosome"/>
    <property type="evidence" value="ECO:0007669"/>
    <property type="project" value="UniProtKB-KW"/>
</dbReference>
<dbReference type="GO" id="GO:0005634">
    <property type="term" value="C:nucleus"/>
    <property type="evidence" value="ECO:0007669"/>
    <property type="project" value="UniProtKB-SubCell"/>
</dbReference>
<dbReference type="GO" id="GO:0003677">
    <property type="term" value="F:DNA binding"/>
    <property type="evidence" value="ECO:0007669"/>
    <property type="project" value="UniProtKB-KW"/>
</dbReference>
<dbReference type="GO" id="GO:0030154">
    <property type="term" value="P:cell differentiation"/>
    <property type="evidence" value="ECO:0007669"/>
    <property type="project" value="UniProtKB-KW"/>
</dbReference>
<dbReference type="GO" id="GO:0030261">
    <property type="term" value="P:chromosome condensation"/>
    <property type="evidence" value="ECO:0007669"/>
    <property type="project" value="UniProtKB-KW"/>
</dbReference>
<dbReference type="GO" id="GO:0007283">
    <property type="term" value="P:spermatogenesis"/>
    <property type="evidence" value="ECO:0007669"/>
    <property type="project" value="UniProtKB-KW"/>
</dbReference>
<comment type="function">
    <text evidence="1">Protamines substitute for histones in the chromatin of sperm during the haploid phase of spermatogenesis. They compact sperm DNA into a highly condensed, stable and inactive complex (By similarity).</text>
</comment>
<comment type="subcellular location">
    <subcellularLocation>
        <location evidence="1">Nucleus</location>
    </subcellularLocation>
    <subcellularLocation>
        <location evidence="1">Chromosome</location>
    </subcellularLocation>
</comment>
<comment type="tissue specificity">
    <text>Testis.</text>
</comment>
<comment type="similarity">
    <text evidence="2">Belongs to the protamine P1 family.</text>
</comment>
<sequence length="47" mass="6528">MARYRCCRSRSRCRRRRRRCYRRRRRCCRRRRRRRVCCRRYSRCRRR</sequence>
<feature type="chain" id="PRO_0000191502" description="Sperm protamine P1">
    <location>
        <begin position="1"/>
        <end position="47"/>
    </location>
</feature>
<reference key="1">
    <citation type="journal article" date="2002" name="Mol. Phylogenet. Evol.">
        <title>Characterization and phylogenetic utility of the mammalian protamine P1 gene.</title>
        <authorList>
            <person name="Van Den Bussche R.A."/>
            <person name="Hoofer S.R."/>
            <person name="Hansen E.W."/>
        </authorList>
    </citation>
    <scope>NUCLEOTIDE SEQUENCE [GENOMIC DNA]</scope>
</reference>
<gene>
    <name type="primary">PRM1</name>
</gene>